<protein>
    <recommendedName>
        <fullName>Uncharacterized lipoprotein MPN_084</fullName>
    </recommendedName>
</protein>
<name>Y084_MYCPN</name>
<evidence type="ECO:0000255" key="1"/>
<evidence type="ECO:0000305" key="2"/>
<proteinExistence type="inferred from homology"/>
<organism>
    <name type="scientific">Mycoplasma pneumoniae (strain ATCC 29342 / M129 / Subtype 1)</name>
    <name type="common">Mycoplasmoides pneumoniae</name>
    <dbReference type="NCBI Taxonomy" id="272634"/>
    <lineage>
        <taxon>Bacteria</taxon>
        <taxon>Bacillati</taxon>
        <taxon>Mycoplasmatota</taxon>
        <taxon>Mycoplasmoidales</taxon>
        <taxon>Mycoplasmoidaceae</taxon>
        <taxon>Mycoplasmoides</taxon>
    </lineage>
</organism>
<reference key="1">
    <citation type="journal article" date="1996" name="Nucleic Acids Res.">
        <title>Complete sequence analysis of the genome of the bacterium Mycoplasma pneumoniae.</title>
        <authorList>
            <person name="Himmelreich R."/>
            <person name="Hilbert H."/>
            <person name="Plagens H."/>
            <person name="Pirkl E."/>
            <person name="Li B.-C."/>
            <person name="Herrmann R."/>
        </authorList>
    </citation>
    <scope>NUCLEOTIDE SEQUENCE [LARGE SCALE GENOMIC DNA]</scope>
    <source>
        <strain>ATCC 29342 / M129 / Subtype 1</strain>
    </source>
</reference>
<sequence length="524" mass="59553">MLLRSVWYKLGSLLIILPLTGCGYVRLKRANFQTDFTINRIPTQGDVYHDNYDLTFSLNFATSSKDSYGTGWLIDWKGDENKPSNTDPFLIYLATNLHVVDALRNPQDYEPYNKDSNGQDYGNRDITHFFALGKYTDPGLLGVETKEQSAFISIQTSAIPKTAYTANDFVDYQYDSLTKQWNKKSDQKDQTQEQTVIGQSWSYKPAYADFAVIEVPLFLDNVRDKQVFDYFVKPAIETYKKLGDTAQLFTEQNLKELEKETYIMLGYPVVESNIYAHILGQGKELRVTQQVNNQPVKKNYVLQTITKEQHTLDITREIPTLIQNKSLSGDFVGSKLLSQEEQQQEHAFLGNLNQGIIDFARLSNFNLQYHNREYQQYGKGLALANTNFSGGSSGTLVLNQQKQISGVYFGVLEFGGTNGTNRESSIGVGQILRVKDDAQLQQHSHNNLLSQLGSSHNSITYDIIFGNKDTKNYYAQFAKKHQTHLYSQISSSNQQELKYVDNDPNLKIKEEAAKSTVQNLTVYS</sequence>
<feature type="signal peptide" evidence="1">
    <location>
        <begin position="1"/>
        <end position="21"/>
    </location>
</feature>
<feature type="chain" id="PRO_0000018739" description="Uncharacterized lipoprotein MPN_084">
    <location>
        <begin position="22"/>
        <end position="524"/>
    </location>
</feature>
<feature type="lipid moiety-binding region" description="N-palmitoyl cysteine" evidence="1">
    <location>
        <position position="22"/>
    </location>
</feature>
<feature type="lipid moiety-binding region" description="S-diacylglycerol cysteine" evidence="1">
    <location>
        <position position="22"/>
    </location>
</feature>
<gene>
    <name type="ordered locus">MPN_084</name>
    <name type="ORF">MP071</name>
    <name type="ORF">R02_orf524</name>
</gene>
<dbReference type="EMBL" id="U00089">
    <property type="protein sequence ID" value="AAB95719.1"/>
    <property type="molecule type" value="Genomic_DNA"/>
</dbReference>
<dbReference type="PIR" id="S73397">
    <property type="entry name" value="S73397"/>
</dbReference>
<dbReference type="RefSeq" id="NP_109772.1">
    <property type="nucleotide sequence ID" value="NC_000912.1"/>
</dbReference>
<dbReference type="RefSeq" id="WP_010874441.1">
    <property type="nucleotide sequence ID" value="NZ_OU342337.1"/>
</dbReference>
<dbReference type="STRING" id="272634.MPN_084"/>
<dbReference type="EnsemblBacteria" id="AAB95719">
    <property type="protein sequence ID" value="AAB95719"/>
    <property type="gene ID" value="MPN_084"/>
</dbReference>
<dbReference type="KEGG" id="mpn:MPN_084"/>
<dbReference type="PATRIC" id="fig|272634.6.peg.86"/>
<dbReference type="HOGENOM" id="CLU_038569_1_0_14"/>
<dbReference type="OrthoDB" id="395427at2"/>
<dbReference type="BioCyc" id="MPNE272634:G1GJ3-132-MONOMER"/>
<dbReference type="Proteomes" id="UP000000808">
    <property type="component" value="Chromosome"/>
</dbReference>
<dbReference type="GO" id="GO:0005886">
    <property type="term" value="C:plasma membrane"/>
    <property type="evidence" value="ECO:0007669"/>
    <property type="project" value="UniProtKB-SubCell"/>
</dbReference>
<dbReference type="InterPro" id="IPR022382">
    <property type="entry name" value="Mycoplasma_peptidase_DUF31"/>
</dbReference>
<dbReference type="InterPro" id="IPR009003">
    <property type="entry name" value="Peptidase_S1_PA"/>
</dbReference>
<dbReference type="InterPro" id="IPR022381">
    <property type="entry name" value="Uncharacterised_MG067"/>
</dbReference>
<dbReference type="Pfam" id="PF01732">
    <property type="entry name" value="Mycop_pep_DUF31"/>
    <property type="match status" value="1"/>
</dbReference>
<dbReference type="PRINTS" id="PR00840">
    <property type="entry name" value="Y06768FAMILY"/>
</dbReference>
<dbReference type="SUPFAM" id="SSF50494">
    <property type="entry name" value="Trypsin-like serine proteases"/>
    <property type="match status" value="1"/>
</dbReference>
<keyword id="KW-1003">Cell membrane</keyword>
<keyword id="KW-0449">Lipoprotein</keyword>
<keyword id="KW-0472">Membrane</keyword>
<keyword id="KW-0564">Palmitate</keyword>
<keyword id="KW-1185">Reference proteome</keyword>
<keyword id="KW-0732">Signal</keyword>
<comment type="subcellular location">
    <subcellularLocation>
        <location evidence="2">Cell membrane</location>
        <topology evidence="2">Lipid-anchor</topology>
    </subcellularLocation>
</comment>
<comment type="similarity">
    <text evidence="2">Belongs to the MG067/MG068/MG395 family.</text>
</comment>
<accession>P75609</accession>